<sequence length="287" mass="31756">MAIRKFKPYTPGTRQRVVTDFSEITGSKPERSLIVSKHRNKGRNNRGVITCRHRGGGHKRQYRLVDFRRDKKNINAKVAAIHYDPHRNARLALLFYEDGEKRYIIAPAGIKVGQNVISGEGVPIEEGNAMPLSSMPLGSNVHCVELYAGRGAQMVRSAGASAQLMAKEGEYVALKLPSTEVRLVRKECYATLGEVGNSEIRNTSLGKAGRRRWLGRRPQVRGSVMNPCDHPHGGGEGKAPIGRAGPVTPWGKAALGLKTRKKNKPSNKLVVRRRRRISKRSRGGRDS</sequence>
<protein>
    <recommendedName>
        <fullName evidence="1">Large ribosomal subunit protein uL2</fullName>
    </recommendedName>
    <alternativeName>
        <fullName evidence="3">50S ribosomal protein L2</fullName>
    </alternativeName>
</protein>
<evidence type="ECO:0000255" key="1">
    <source>
        <dbReference type="HAMAP-Rule" id="MF_01320"/>
    </source>
</evidence>
<evidence type="ECO:0000256" key="2">
    <source>
        <dbReference type="SAM" id="MobiDB-lite"/>
    </source>
</evidence>
<evidence type="ECO:0000305" key="3"/>
<comment type="function">
    <text evidence="1">One of the primary rRNA binding proteins. Required for association of the 30S and 50S subunits to form the 70S ribosome, for tRNA binding and peptide bond formation. It has been suggested to have peptidyltransferase activity; this is somewhat controversial. Makes several contacts with the 16S rRNA in the 70S ribosome.</text>
</comment>
<comment type="subunit">
    <text evidence="1">Part of the 50S ribosomal subunit. Forms a bridge to the 30S subunit in the 70S ribosome.</text>
</comment>
<comment type="similarity">
    <text evidence="1">Belongs to the universal ribosomal protein uL2 family.</text>
</comment>
<dbReference type="EMBL" id="BX548174">
    <property type="protein sequence ID" value="CAE20014.1"/>
    <property type="molecule type" value="Genomic_DNA"/>
</dbReference>
<dbReference type="RefSeq" id="WP_011133183.1">
    <property type="nucleotide sequence ID" value="NC_005072.1"/>
</dbReference>
<dbReference type="SMR" id="Q7UZV0"/>
<dbReference type="STRING" id="59919.PMM1555"/>
<dbReference type="KEGG" id="pmm:PMM1555"/>
<dbReference type="eggNOG" id="COG0090">
    <property type="taxonomic scope" value="Bacteria"/>
</dbReference>
<dbReference type="HOGENOM" id="CLU_036235_2_1_3"/>
<dbReference type="OrthoDB" id="9778722at2"/>
<dbReference type="Proteomes" id="UP000001026">
    <property type="component" value="Chromosome"/>
</dbReference>
<dbReference type="GO" id="GO:0015934">
    <property type="term" value="C:large ribosomal subunit"/>
    <property type="evidence" value="ECO:0007669"/>
    <property type="project" value="InterPro"/>
</dbReference>
<dbReference type="GO" id="GO:0019843">
    <property type="term" value="F:rRNA binding"/>
    <property type="evidence" value="ECO:0007669"/>
    <property type="project" value="UniProtKB-UniRule"/>
</dbReference>
<dbReference type="GO" id="GO:0003735">
    <property type="term" value="F:structural constituent of ribosome"/>
    <property type="evidence" value="ECO:0007669"/>
    <property type="project" value="InterPro"/>
</dbReference>
<dbReference type="GO" id="GO:0016740">
    <property type="term" value="F:transferase activity"/>
    <property type="evidence" value="ECO:0007669"/>
    <property type="project" value="InterPro"/>
</dbReference>
<dbReference type="GO" id="GO:0006412">
    <property type="term" value="P:translation"/>
    <property type="evidence" value="ECO:0007669"/>
    <property type="project" value="UniProtKB-UniRule"/>
</dbReference>
<dbReference type="FunFam" id="2.30.30.30:FF:000001">
    <property type="entry name" value="50S ribosomal protein L2"/>
    <property type="match status" value="1"/>
</dbReference>
<dbReference type="FunFam" id="2.40.50.140:FF:000003">
    <property type="entry name" value="50S ribosomal protein L2"/>
    <property type="match status" value="1"/>
</dbReference>
<dbReference type="FunFam" id="4.10.950.10:FF:000001">
    <property type="entry name" value="50S ribosomal protein L2"/>
    <property type="match status" value="1"/>
</dbReference>
<dbReference type="Gene3D" id="2.30.30.30">
    <property type="match status" value="1"/>
</dbReference>
<dbReference type="Gene3D" id="2.40.50.140">
    <property type="entry name" value="Nucleic acid-binding proteins"/>
    <property type="match status" value="1"/>
</dbReference>
<dbReference type="Gene3D" id="4.10.950.10">
    <property type="entry name" value="Ribosomal protein L2, domain 3"/>
    <property type="match status" value="1"/>
</dbReference>
<dbReference type="HAMAP" id="MF_01320_B">
    <property type="entry name" value="Ribosomal_uL2_B"/>
    <property type="match status" value="1"/>
</dbReference>
<dbReference type="InterPro" id="IPR012340">
    <property type="entry name" value="NA-bd_OB-fold"/>
</dbReference>
<dbReference type="InterPro" id="IPR014722">
    <property type="entry name" value="Rib_uL2_dom2"/>
</dbReference>
<dbReference type="InterPro" id="IPR002171">
    <property type="entry name" value="Ribosomal_uL2"/>
</dbReference>
<dbReference type="InterPro" id="IPR005880">
    <property type="entry name" value="Ribosomal_uL2_bac/org-type"/>
</dbReference>
<dbReference type="InterPro" id="IPR022669">
    <property type="entry name" value="Ribosomal_uL2_C"/>
</dbReference>
<dbReference type="InterPro" id="IPR022671">
    <property type="entry name" value="Ribosomal_uL2_CS"/>
</dbReference>
<dbReference type="InterPro" id="IPR014726">
    <property type="entry name" value="Ribosomal_uL2_dom3"/>
</dbReference>
<dbReference type="InterPro" id="IPR022666">
    <property type="entry name" value="Ribosomal_uL2_RNA-bd_dom"/>
</dbReference>
<dbReference type="InterPro" id="IPR008991">
    <property type="entry name" value="Translation_prot_SH3-like_sf"/>
</dbReference>
<dbReference type="NCBIfam" id="TIGR01171">
    <property type="entry name" value="rplB_bact"/>
    <property type="match status" value="1"/>
</dbReference>
<dbReference type="PANTHER" id="PTHR13691:SF5">
    <property type="entry name" value="LARGE RIBOSOMAL SUBUNIT PROTEIN UL2M"/>
    <property type="match status" value="1"/>
</dbReference>
<dbReference type="PANTHER" id="PTHR13691">
    <property type="entry name" value="RIBOSOMAL PROTEIN L2"/>
    <property type="match status" value="1"/>
</dbReference>
<dbReference type="Pfam" id="PF00181">
    <property type="entry name" value="Ribosomal_L2"/>
    <property type="match status" value="1"/>
</dbReference>
<dbReference type="Pfam" id="PF03947">
    <property type="entry name" value="Ribosomal_L2_C"/>
    <property type="match status" value="1"/>
</dbReference>
<dbReference type="PIRSF" id="PIRSF002158">
    <property type="entry name" value="Ribosomal_L2"/>
    <property type="match status" value="1"/>
</dbReference>
<dbReference type="SMART" id="SM01383">
    <property type="entry name" value="Ribosomal_L2"/>
    <property type="match status" value="1"/>
</dbReference>
<dbReference type="SMART" id="SM01382">
    <property type="entry name" value="Ribosomal_L2_C"/>
    <property type="match status" value="1"/>
</dbReference>
<dbReference type="SUPFAM" id="SSF50249">
    <property type="entry name" value="Nucleic acid-binding proteins"/>
    <property type="match status" value="1"/>
</dbReference>
<dbReference type="SUPFAM" id="SSF50104">
    <property type="entry name" value="Translation proteins SH3-like domain"/>
    <property type="match status" value="1"/>
</dbReference>
<dbReference type="PROSITE" id="PS00467">
    <property type="entry name" value="RIBOSOMAL_L2"/>
    <property type="match status" value="1"/>
</dbReference>
<name>RL2_PROMP</name>
<feature type="chain" id="PRO_0000129598" description="Large ribosomal subunit protein uL2">
    <location>
        <begin position="1"/>
        <end position="287"/>
    </location>
</feature>
<feature type="region of interest" description="Disordered" evidence="2">
    <location>
        <begin position="221"/>
        <end position="287"/>
    </location>
</feature>
<feature type="compositionally biased region" description="Basic residues" evidence="2">
    <location>
        <begin position="258"/>
        <end position="287"/>
    </location>
</feature>
<proteinExistence type="inferred from homology"/>
<reference key="1">
    <citation type="journal article" date="2003" name="Nature">
        <title>Genome divergence in two Prochlorococcus ecotypes reflects oceanic niche differentiation.</title>
        <authorList>
            <person name="Rocap G."/>
            <person name="Larimer F.W."/>
            <person name="Lamerdin J.E."/>
            <person name="Malfatti S."/>
            <person name="Chain P."/>
            <person name="Ahlgren N.A."/>
            <person name="Arellano A."/>
            <person name="Coleman M."/>
            <person name="Hauser L."/>
            <person name="Hess W.R."/>
            <person name="Johnson Z.I."/>
            <person name="Land M.L."/>
            <person name="Lindell D."/>
            <person name="Post A.F."/>
            <person name="Regala W."/>
            <person name="Shah M."/>
            <person name="Shaw S.L."/>
            <person name="Steglich C."/>
            <person name="Sullivan M.B."/>
            <person name="Ting C.S."/>
            <person name="Tolonen A."/>
            <person name="Webb E.A."/>
            <person name="Zinser E.R."/>
            <person name="Chisholm S.W."/>
        </authorList>
    </citation>
    <scope>NUCLEOTIDE SEQUENCE [LARGE SCALE GENOMIC DNA]</scope>
    <source>
        <strain>CCMP1986 / NIES-2087 / MED4</strain>
    </source>
</reference>
<organism>
    <name type="scientific">Prochlorococcus marinus subsp. pastoris (strain CCMP1986 / NIES-2087 / MED4)</name>
    <dbReference type="NCBI Taxonomy" id="59919"/>
    <lineage>
        <taxon>Bacteria</taxon>
        <taxon>Bacillati</taxon>
        <taxon>Cyanobacteriota</taxon>
        <taxon>Cyanophyceae</taxon>
        <taxon>Synechococcales</taxon>
        <taxon>Prochlorococcaceae</taxon>
        <taxon>Prochlorococcus</taxon>
    </lineage>
</organism>
<gene>
    <name evidence="1" type="primary">rplB</name>
    <name evidence="1" type="synonym">rpl2</name>
    <name type="ordered locus">PMM1555</name>
</gene>
<accession>Q7UZV0</accession>
<keyword id="KW-0687">Ribonucleoprotein</keyword>
<keyword id="KW-0689">Ribosomal protein</keyword>
<keyword id="KW-0694">RNA-binding</keyword>
<keyword id="KW-0699">rRNA-binding</keyword>